<accession>Q0HLM3</accession>
<gene>
    <name evidence="1" type="primary">dapB</name>
    <name type="ordered locus">Shewmr4_0964</name>
</gene>
<name>DAPB_SHESM</name>
<proteinExistence type="inferred from homology"/>
<protein>
    <recommendedName>
        <fullName evidence="1">4-hydroxy-tetrahydrodipicolinate reductase</fullName>
        <shortName evidence="1">HTPA reductase</shortName>
        <ecNumber evidence="1">1.17.1.8</ecNumber>
    </recommendedName>
</protein>
<keyword id="KW-0028">Amino-acid biosynthesis</keyword>
<keyword id="KW-0963">Cytoplasm</keyword>
<keyword id="KW-0220">Diaminopimelate biosynthesis</keyword>
<keyword id="KW-0457">Lysine biosynthesis</keyword>
<keyword id="KW-0520">NAD</keyword>
<keyword id="KW-0521">NADP</keyword>
<keyword id="KW-0560">Oxidoreductase</keyword>
<organism>
    <name type="scientific">Shewanella sp. (strain MR-4)</name>
    <dbReference type="NCBI Taxonomy" id="60480"/>
    <lineage>
        <taxon>Bacteria</taxon>
        <taxon>Pseudomonadati</taxon>
        <taxon>Pseudomonadota</taxon>
        <taxon>Gammaproteobacteria</taxon>
        <taxon>Alteromonadales</taxon>
        <taxon>Shewanellaceae</taxon>
        <taxon>Shewanella</taxon>
    </lineage>
</organism>
<dbReference type="EC" id="1.17.1.8" evidence="1"/>
<dbReference type="EMBL" id="CP000446">
    <property type="protein sequence ID" value="ABI38044.1"/>
    <property type="molecule type" value="Genomic_DNA"/>
</dbReference>
<dbReference type="RefSeq" id="WP_011621756.1">
    <property type="nucleotide sequence ID" value="NC_008321.1"/>
</dbReference>
<dbReference type="SMR" id="Q0HLM3"/>
<dbReference type="KEGG" id="she:Shewmr4_0964"/>
<dbReference type="HOGENOM" id="CLU_047479_2_1_6"/>
<dbReference type="UniPathway" id="UPA00034">
    <property type="reaction ID" value="UER00018"/>
</dbReference>
<dbReference type="GO" id="GO:0005829">
    <property type="term" value="C:cytosol"/>
    <property type="evidence" value="ECO:0007669"/>
    <property type="project" value="TreeGrafter"/>
</dbReference>
<dbReference type="GO" id="GO:0008839">
    <property type="term" value="F:4-hydroxy-tetrahydrodipicolinate reductase"/>
    <property type="evidence" value="ECO:0007669"/>
    <property type="project" value="UniProtKB-EC"/>
</dbReference>
<dbReference type="GO" id="GO:0051287">
    <property type="term" value="F:NAD binding"/>
    <property type="evidence" value="ECO:0007669"/>
    <property type="project" value="UniProtKB-UniRule"/>
</dbReference>
<dbReference type="GO" id="GO:0050661">
    <property type="term" value="F:NADP binding"/>
    <property type="evidence" value="ECO:0007669"/>
    <property type="project" value="UniProtKB-UniRule"/>
</dbReference>
<dbReference type="GO" id="GO:0016726">
    <property type="term" value="F:oxidoreductase activity, acting on CH or CH2 groups, NAD or NADP as acceptor"/>
    <property type="evidence" value="ECO:0007669"/>
    <property type="project" value="UniProtKB-UniRule"/>
</dbReference>
<dbReference type="GO" id="GO:0019877">
    <property type="term" value="P:diaminopimelate biosynthetic process"/>
    <property type="evidence" value="ECO:0007669"/>
    <property type="project" value="UniProtKB-UniRule"/>
</dbReference>
<dbReference type="GO" id="GO:0009089">
    <property type="term" value="P:lysine biosynthetic process via diaminopimelate"/>
    <property type="evidence" value="ECO:0007669"/>
    <property type="project" value="UniProtKB-UniRule"/>
</dbReference>
<dbReference type="CDD" id="cd02274">
    <property type="entry name" value="DHDPR_N"/>
    <property type="match status" value="1"/>
</dbReference>
<dbReference type="FunFam" id="3.30.360.10:FF:000004">
    <property type="entry name" value="4-hydroxy-tetrahydrodipicolinate reductase"/>
    <property type="match status" value="1"/>
</dbReference>
<dbReference type="FunFam" id="3.40.50.720:FF:000048">
    <property type="entry name" value="4-hydroxy-tetrahydrodipicolinate reductase"/>
    <property type="match status" value="1"/>
</dbReference>
<dbReference type="Gene3D" id="3.30.360.10">
    <property type="entry name" value="Dihydrodipicolinate Reductase, domain 2"/>
    <property type="match status" value="1"/>
</dbReference>
<dbReference type="Gene3D" id="3.40.50.720">
    <property type="entry name" value="NAD(P)-binding Rossmann-like Domain"/>
    <property type="match status" value="1"/>
</dbReference>
<dbReference type="HAMAP" id="MF_00102">
    <property type="entry name" value="DapB"/>
    <property type="match status" value="1"/>
</dbReference>
<dbReference type="InterPro" id="IPR022663">
    <property type="entry name" value="DapB_C"/>
</dbReference>
<dbReference type="InterPro" id="IPR000846">
    <property type="entry name" value="DapB_N"/>
</dbReference>
<dbReference type="InterPro" id="IPR022664">
    <property type="entry name" value="DapB_N_CS"/>
</dbReference>
<dbReference type="InterPro" id="IPR023940">
    <property type="entry name" value="DHDPR_bac"/>
</dbReference>
<dbReference type="InterPro" id="IPR036291">
    <property type="entry name" value="NAD(P)-bd_dom_sf"/>
</dbReference>
<dbReference type="NCBIfam" id="TIGR00036">
    <property type="entry name" value="dapB"/>
    <property type="match status" value="1"/>
</dbReference>
<dbReference type="PANTHER" id="PTHR20836:SF0">
    <property type="entry name" value="4-HYDROXY-TETRAHYDRODIPICOLINATE REDUCTASE 1, CHLOROPLASTIC-RELATED"/>
    <property type="match status" value="1"/>
</dbReference>
<dbReference type="PANTHER" id="PTHR20836">
    <property type="entry name" value="DIHYDRODIPICOLINATE REDUCTASE"/>
    <property type="match status" value="1"/>
</dbReference>
<dbReference type="Pfam" id="PF05173">
    <property type="entry name" value="DapB_C"/>
    <property type="match status" value="1"/>
</dbReference>
<dbReference type="Pfam" id="PF01113">
    <property type="entry name" value="DapB_N"/>
    <property type="match status" value="1"/>
</dbReference>
<dbReference type="PIRSF" id="PIRSF000161">
    <property type="entry name" value="DHPR"/>
    <property type="match status" value="1"/>
</dbReference>
<dbReference type="SUPFAM" id="SSF55347">
    <property type="entry name" value="Glyceraldehyde-3-phosphate dehydrogenase-like, C-terminal domain"/>
    <property type="match status" value="1"/>
</dbReference>
<dbReference type="SUPFAM" id="SSF51735">
    <property type="entry name" value="NAD(P)-binding Rossmann-fold domains"/>
    <property type="match status" value="1"/>
</dbReference>
<dbReference type="PROSITE" id="PS01298">
    <property type="entry name" value="DAPB"/>
    <property type="match status" value="1"/>
</dbReference>
<sequence length="270" mass="29279">MGGQVRVAIVGAGGRMGRTLIESAYHQEHIRLGAAIERPGSSLVGVDAGELAGVGKLNVLVMDSLDYATDDFDVLIDFTAPEASIVHLDWCVRHKKAMVIGTTGFNHAQKEQINAFAEQTPVVMAPNMSVGVNLMWKLLELAAEVMGDYTDIEIIEGHHRHKKDAPSGTALKMGEVIAKTLGRDLEKCAVYGREGITGERDRETIGFATVRAGDLVGEHTAMFADIGERLEITHKASSRMTFANGAMRAAHWLVEQKPGLYDMQQVLGLN</sequence>
<feature type="chain" id="PRO_1000008639" description="4-hydroxy-tetrahydrodipicolinate reductase">
    <location>
        <begin position="1"/>
        <end position="270"/>
    </location>
</feature>
<feature type="active site" description="Proton donor/acceptor" evidence="1">
    <location>
        <position position="158"/>
    </location>
</feature>
<feature type="active site" description="Proton donor" evidence="1">
    <location>
        <position position="162"/>
    </location>
</feature>
<feature type="binding site" evidence="1">
    <location>
        <begin position="11"/>
        <end position="16"/>
    </location>
    <ligand>
        <name>NAD(+)</name>
        <dbReference type="ChEBI" id="CHEBI:57540"/>
    </ligand>
</feature>
<feature type="binding site" evidence="1">
    <location>
        <position position="37"/>
    </location>
    <ligand>
        <name>NAD(+)</name>
        <dbReference type="ChEBI" id="CHEBI:57540"/>
    </ligand>
</feature>
<feature type="binding site" evidence="1">
    <location>
        <position position="38"/>
    </location>
    <ligand>
        <name>NADP(+)</name>
        <dbReference type="ChEBI" id="CHEBI:58349"/>
    </ligand>
</feature>
<feature type="binding site" evidence="1">
    <location>
        <begin position="101"/>
        <end position="103"/>
    </location>
    <ligand>
        <name>NAD(+)</name>
        <dbReference type="ChEBI" id="CHEBI:57540"/>
    </ligand>
</feature>
<feature type="binding site" evidence="1">
    <location>
        <begin position="125"/>
        <end position="128"/>
    </location>
    <ligand>
        <name>NAD(+)</name>
        <dbReference type="ChEBI" id="CHEBI:57540"/>
    </ligand>
</feature>
<feature type="binding site" evidence="1">
    <location>
        <position position="159"/>
    </location>
    <ligand>
        <name>(S)-2,3,4,5-tetrahydrodipicolinate</name>
        <dbReference type="ChEBI" id="CHEBI:16845"/>
    </ligand>
</feature>
<feature type="binding site" evidence="1">
    <location>
        <begin position="168"/>
        <end position="169"/>
    </location>
    <ligand>
        <name>(S)-2,3,4,5-tetrahydrodipicolinate</name>
        <dbReference type="ChEBI" id="CHEBI:16845"/>
    </ligand>
</feature>
<reference key="1">
    <citation type="submission" date="2006-08" db="EMBL/GenBank/DDBJ databases">
        <title>Complete sequence of Shewanella sp. MR-4.</title>
        <authorList>
            <consortium name="US DOE Joint Genome Institute"/>
            <person name="Copeland A."/>
            <person name="Lucas S."/>
            <person name="Lapidus A."/>
            <person name="Barry K."/>
            <person name="Detter J.C."/>
            <person name="Glavina del Rio T."/>
            <person name="Hammon N."/>
            <person name="Israni S."/>
            <person name="Dalin E."/>
            <person name="Tice H."/>
            <person name="Pitluck S."/>
            <person name="Kiss H."/>
            <person name="Brettin T."/>
            <person name="Bruce D."/>
            <person name="Han C."/>
            <person name="Tapia R."/>
            <person name="Gilna P."/>
            <person name="Schmutz J."/>
            <person name="Larimer F."/>
            <person name="Land M."/>
            <person name="Hauser L."/>
            <person name="Kyrpides N."/>
            <person name="Mikhailova N."/>
            <person name="Nealson K."/>
            <person name="Konstantinidis K."/>
            <person name="Klappenbach J."/>
            <person name="Tiedje J."/>
            <person name="Richardson P."/>
        </authorList>
    </citation>
    <scope>NUCLEOTIDE SEQUENCE [LARGE SCALE GENOMIC DNA]</scope>
    <source>
        <strain>MR-4</strain>
    </source>
</reference>
<evidence type="ECO:0000255" key="1">
    <source>
        <dbReference type="HAMAP-Rule" id="MF_00102"/>
    </source>
</evidence>
<evidence type="ECO:0000305" key="2"/>
<comment type="function">
    <text evidence="1">Catalyzes the conversion of 4-hydroxy-tetrahydrodipicolinate (HTPA) to tetrahydrodipicolinate.</text>
</comment>
<comment type="catalytic activity">
    <reaction evidence="1">
        <text>(S)-2,3,4,5-tetrahydrodipicolinate + NAD(+) + H2O = (2S,4S)-4-hydroxy-2,3,4,5-tetrahydrodipicolinate + NADH + H(+)</text>
        <dbReference type="Rhea" id="RHEA:35323"/>
        <dbReference type="ChEBI" id="CHEBI:15377"/>
        <dbReference type="ChEBI" id="CHEBI:15378"/>
        <dbReference type="ChEBI" id="CHEBI:16845"/>
        <dbReference type="ChEBI" id="CHEBI:57540"/>
        <dbReference type="ChEBI" id="CHEBI:57945"/>
        <dbReference type="ChEBI" id="CHEBI:67139"/>
        <dbReference type="EC" id="1.17.1.8"/>
    </reaction>
</comment>
<comment type="catalytic activity">
    <reaction evidence="1">
        <text>(S)-2,3,4,5-tetrahydrodipicolinate + NADP(+) + H2O = (2S,4S)-4-hydroxy-2,3,4,5-tetrahydrodipicolinate + NADPH + H(+)</text>
        <dbReference type="Rhea" id="RHEA:35331"/>
        <dbReference type="ChEBI" id="CHEBI:15377"/>
        <dbReference type="ChEBI" id="CHEBI:15378"/>
        <dbReference type="ChEBI" id="CHEBI:16845"/>
        <dbReference type="ChEBI" id="CHEBI:57783"/>
        <dbReference type="ChEBI" id="CHEBI:58349"/>
        <dbReference type="ChEBI" id="CHEBI:67139"/>
        <dbReference type="EC" id="1.17.1.8"/>
    </reaction>
</comment>
<comment type="pathway">
    <text evidence="1">Amino-acid biosynthesis; L-lysine biosynthesis via DAP pathway; (S)-tetrahydrodipicolinate from L-aspartate: step 4/4.</text>
</comment>
<comment type="subcellular location">
    <subcellularLocation>
        <location evidence="1">Cytoplasm</location>
    </subcellularLocation>
</comment>
<comment type="similarity">
    <text evidence="1">Belongs to the DapB family.</text>
</comment>
<comment type="caution">
    <text evidence="2">Was originally thought to be a dihydrodipicolinate reductase (DHDPR), catalyzing the conversion of dihydrodipicolinate to tetrahydrodipicolinate. However, it was shown in E.coli that the substrate of the enzymatic reaction is not dihydrodipicolinate (DHDP) but in fact (2S,4S)-4-hydroxy-2,3,4,5-tetrahydrodipicolinic acid (HTPA), the product released by the DapA-catalyzed reaction.</text>
</comment>